<evidence type="ECO:0000255" key="1">
    <source>
        <dbReference type="HAMAP-Rule" id="MF_01320"/>
    </source>
</evidence>
<evidence type="ECO:0000256" key="2">
    <source>
        <dbReference type="SAM" id="MobiDB-lite"/>
    </source>
</evidence>
<evidence type="ECO:0000305" key="3"/>
<protein>
    <recommendedName>
        <fullName evidence="1">Large ribosomal subunit protein uL2</fullName>
    </recommendedName>
    <alternativeName>
        <fullName evidence="3">50S ribosomal protein L2</fullName>
    </alternativeName>
</protein>
<gene>
    <name evidence="1" type="primary">rplB</name>
    <name type="ordered locus">BCE33L0107</name>
</gene>
<proteinExistence type="inferred from homology"/>
<reference key="1">
    <citation type="journal article" date="2006" name="J. Bacteriol.">
        <title>Pathogenomic sequence analysis of Bacillus cereus and Bacillus thuringiensis isolates closely related to Bacillus anthracis.</title>
        <authorList>
            <person name="Han C.S."/>
            <person name="Xie G."/>
            <person name="Challacombe J.F."/>
            <person name="Altherr M.R."/>
            <person name="Bhotika S.S."/>
            <person name="Bruce D."/>
            <person name="Campbell C.S."/>
            <person name="Campbell M.L."/>
            <person name="Chen J."/>
            <person name="Chertkov O."/>
            <person name="Cleland C."/>
            <person name="Dimitrijevic M."/>
            <person name="Doggett N.A."/>
            <person name="Fawcett J.J."/>
            <person name="Glavina T."/>
            <person name="Goodwin L.A."/>
            <person name="Hill K.K."/>
            <person name="Hitchcock P."/>
            <person name="Jackson P.J."/>
            <person name="Keim P."/>
            <person name="Kewalramani A.R."/>
            <person name="Longmire J."/>
            <person name="Lucas S."/>
            <person name="Malfatti S."/>
            <person name="McMurry K."/>
            <person name="Meincke L.J."/>
            <person name="Misra M."/>
            <person name="Moseman B.L."/>
            <person name="Mundt M."/>
            <person name="Munk A.C."/>
            <person name="Okinaka R.T."/>
            <person name="Parson-Quintana B."/>
            <person name="Reilly L.P."/>
            <person name="Richardson P."/>
            <person name="Robinson D.L."/>
            <person name="Rubin E."/>
            <person name="Saunders E."/>
            <person name="Tapia R."/>
            <person name="Tesmer J.G."/>
            <person name="Thayer N."/>
            <person name="Thompson L.S."/>
            <person name="Tice H."/>
            <person name="Ticknor L.O."/>
            <person name="Wills P.L."/>
            <person name="Brettin T.S."/>
            <person name="Gilna P."/>
        </authorList>
    </citation>
    <scope>NUCLEOTIDE SEQUENCE [LARGE SCALE GENOMIC DNA]</scope>
    <source>
        <strain>ZK / E33L</strain>
    </source>
</reference>
<organism>
    <name type="scientific">Bacillus cereus (strain ZK / E33L)</name>
    <dbReference type="NCBI Taxonomy" id="288681"/>
    <lineage>
        <taxon>Bacteria</taxon>
        <taxon>Bacillati</taxon>
        <taxon>Bacillota</taxon>
        <taxon>Bacilli</taxon>
        <taxon>Bacillales</taxon>
        <taxon>Bacillaceae</taxon>
        <taxon>Bacillus</taxon>
        <taxon>Bacillus cereus group</taxon>
    </lineage>
</organism>
<comment type="function">
    <text evidence="1">One of the primary rRNA binding proteins. Required for association of the 30S and 50S subunits to form the 70S ribosome, for tRNA binding and peptide bond formation. It has been suggested to have peptidyltransferase activity; this is somewhat controversial. Makes several contacts with the 16S rRNA in the 70S ribosome.</text>
</comment>
<comment type="subunit">
    <text evidence="1">Part of the 50S ribosomal subunit. Forms a bridge to the 30S subunit in the 70S ribosome.</text>
</comment>
<comment type="similarity">
    <text evidence="1">Belongs to the universal ribosomal protein uL2 family.</text>
</comment>
<sequence>MGIKKYNPTTNGRRNMTTNDFAEITTDRPEKSLLAPLSKKAGRNNQGKITVRHQGGGHKRQYRIIDFKRNKDGIPGRVATIEYDPNRSANIALINYVDGEKRYILAPKNLEVGMEIMSGAEADIKIGNALPLINIPVGTVVHNIELKPGRGGQLVRSAGTSAQVLGKEGKYVLVRLTSGEVRLVLSACRATVGQVGNESHELIKIGKAGRSRWLGKRPTVRGSVMNPVDHPHGGGEGRSPIGRKSPMSPWGKPTLGFKTRKKNKASDKFIVRRRKK</sequence>
<name>RL2_BACCZ</name>
<keyword id="KW-0687">Ribonucleoprotein</keyword>
<keyword id="KW-0689">Ribosomal protein</keyword>
<keyword id="KW-0694">RNA-binding</keyword>
<keyword id="KW-0699">rRNA-binding</keyword>
<feature type="chain" id="PRO_0000237150" description="Large ribosomal subunit protein uL2">
    <location>
        <begin position="1"/>
        <end position="276"/>
    </location>
</feature>
<feature type="region of interest" description="Disordered" evidence="2">
    <location>
        <begin position="1"/>
        <end position="20"/>
    </location>
</feature>
<feature type="region of interest" description="Disordered" evidence="2">
    <location>
        <begin position="219"/>
        <end position="276"/>
    </location>
</feature>
<feature type="compositionally biased region" description="Polar residues" evidence="2">
    <location>
        <begin position="7"/>
        <end position="20"/>
    </location>
</feature>
<dbReference type="EMBL" id="CP000001">
    <property type="protein sequence ID" value="AAU20124.1"/>
    <property type="molecule type" value="Genomic_DNA"/>
</dbReference>
<dbReference type="RefSeq" id="WP_000511580.1">
    <property type="nucleotide sequence ID" value="NZ_CP009968.1"/>
</dbReference>
<dbReference type="SMR" id="Q63H87"/>
<dbReference type="GeneID" id="93010940"/>
<dbReference type="KEGG" id="bcz:BCE33L0107"/>
<dbReference type="PATRIC" id="fig|288681.22.peg.44"/>
<dbReference type="Proteomes" id="UP000002612">
    <property type="component" value="Chromosome"/>
</dbReference>
<dbReference type="GO" id="GO:0015934">
    <property type="term" value="C:large ribosomal subunit"/>
    <property type="evidence" value="ECO:0007669"/>
    <property type="project" value="InterPro"/>
</dbReference>
<dbReference type="GO" id="GO:0019843">
    <property type="term" value="F:rRNA binding"/>
    <property type="evidence" value="ECO:0007669"/>
    <property type="project" value="UniProtKB-UniRule"/>
</dbReference>
<dbReference type="GO" id="GO:0003735">
    <property type="term" value="F:structural constituent of ribosome"/>
    <property type="evidence" value="ECO:0007669"/>
    <property type="project" value="InterPro"/>
</dbReference>
<dbReference type="GO" id="GO:0016740">
    <property type="term" value="F:transferase activity"/>
    <property type="evidence" value="ECO:0007669"/>
    <property type="project" value="InterPro"/>
</dbReference>
<dbReference type="GO" id="GO:0002181">
    <property type="term" value="P:cytoplasmic translation"/>
    <property type="evidence" value="ECO:0007669"/>
    <property type="project" value="TreeGrafter"/>
</dbReference>
<dbReference type="FunFam" id="2.30.30.30:FF:000001">
    <property type="entry name" value="50S ribosomal protein L2"/>
    <property type="match status" value="1"/>
</dbReference>
<dbReference type="FunFam" id="2.40.50.140:FF:000003">
    <property type="entry name" value="50S ribosomal protein L2"/>
    <property type="match status" value="1"/>
</dbReference>
<dbReference type="FunFam" id="4.10.950.10:FF:000001">
    <property type="entry name" value="50S ribosomal protein L2"/>
    <property type="match status" value="1"/>
</dbReference>
<dbReference type="Gene3D" id="2.30.30.30">
    <property type="match status" value="1"/>
</dbReference>
<dbReference type="Gene3D" id="2.40.50.140">
    <property type="entry name" value="Nucleic acid-binding proteins"/>
    <property type="match status" value="1"/>
</dbReference>
<dbReference type="Gene3D" id="4.10.950.10">
    <property type="entry name" value="Ribosomal protein L2, domain 3"/>
    <property type="match status" value="1"/>
</dbReference>
<dbReference type="HAMAP" id="MF_01320_B">
    <property type="entry name" value="Ribosomal_uL2_B"/>
    <property type="match status" value="1"/>
</dbReference>
<dbReference type="InterPro" id="IPR012340">
    <property type="entry name" value="NA-bd_OB-fold"/>
</dbReference>
<dbReference type="InterPro" id="IPR014722">
    <property type="entry name" value="Rib_uL2_dom2"/>
</dbReference>
<dbReference type="InterPro" id="IPR002171">
    <property type="entry name" value="Ribosomal_uL2"/>
</dbReference>
<dbReference type="InterPro" id="IPR005880">
    <property type="entry name" value="Ribosomal_uL2_bac/org-type"/>
</dbReference>
<dbReference type="InterPro" id="IPR022669">
    <property type="entry name" value="Ribosomal_uL2_C"/>
</dbReference>
<dbReference type="InterPro" id="IPR022671">
    <property type="entry name" value="Ribosomal_uL2_CS"/>
</dbReference>
<dbReference type="InterPro" id="IPR014726">
    <property type="entry name" value="Ribosomal_uL2_dom3"/>
</dbReference>
<dbReference type="InterPro" id="IPR022666">
    <property type="entry name" value="Ribosomal_uL2_RNA-bd_dom"/>
</dbReference>
<dbReference type="InterPro" id="IPR008991">
    <property type="entry name" value="Translation_prot_SH3-like_sf"/>
</dbReference>
<dbReference type="NCBIfam" id="TIGR01171">
    <property type="entry name" value="rplB_bact"/>
    <property type="match status" value="1"/>
</dbReference>
<dbReference type="PANTHER" id="PTHR13691:SF5">
    <property type="entry name" value="LARGE RIBOSOMAL SUBUNIT PROTEIN UL2M"/>
    <property type="match status" value="1"/>
</dbReference>
<dbReference type="PANTHER" id="PTHR13691">
    <property type="entry name" value="RIBOSOMAL PROTEIN L2"/>
    <property type="match status" value="1"/>
</dbReference>
<dbReference type="Pfam" id="PF00181">
    <property type="entry name" value="Ribosomal_L2"/>
    <property type="match status" value="1"/>
</dbReference>
<dbReference type="Pfam" id="PF03947">
    <property type="entry name" value="Ribosomal_L2_C"/>
    <property type="match status" value="1"/>
</dbReference>
<dbReference type="PIRSF" id="PIRSF002158">
    <property type="entry name" value="Ribosomal_L2"/>
    <property type="match status" value="1"/>
</dbReference>
<dbReference type="SMART" id="SM01383">
    <property type="entry name" value="Ribosomal_L2"/>
    <property type="match status" value="1"/>
</dbReference>
<dbReference type="SMART" id="SM01382">
    <property type="entry name" value="Ribosomal_L2_C"/>
    <property type="match status" value="1"/>
</dbReference>
<dbReference type="SUPFAM" id="SSF50249">
    <property type="entry name" value="Nucleic acid-binding proteins"/>
    <property type="match status" value="1"/>
</dbReference>
<dbReference type="SUPFAM" id="SSF50104">
    <property type="entry name" value="Translation proteins SH3-like domain"/>
    <property type="match status" value="1"/>
</dbReference>
<dbReference type="PROSITE" id="PS00467">
    <property type="entry name" value="RIBOSOMAL_L2"/>
    <property type="match status" value="1"/>
</dbReference>
<accession>Q63H87</accession>